<sequence length="193" mass="20261">MIGRIAGTLLEKNPPHILVDCNGVGYEVDVPMSTFYNLPHTGEKVVLLTQLIVREDAHLLYGFLTPPERSTFRELLKITGVGARMALAVLSGMSVAELSQAVTLQDAARLTRVPGIGKKTAERLLLELKGKLGADLGPLAGAASPSDHATDILNALVALGYSEKEALAAIKNVPAGTGVSEGIKLSLKALSKA</sequence>
<dbReference type="EMBL" id="CP000572">
    <property type="protein sequence ID" value="ABN90711.1"/>
    <property type="molecule type" value="Genomic_DNA"/>
</dbReference>
<dbReference type="RefSeq" id="WP_004194029.1">
    <property type="nucleotide sequence ID" value="NC_009076.1"/>
</dbReference>
<dbReference type="SMR" id="A3NZ66"/>
<dbReference type="GeneID" id="93061493"/>
<dbReference type="KEGG" id="bpl:BURPS1106A_3400"/>
<dbReference type="HOGENOM" id="CLU_087936_0_0_4"/>
<dbReference type="Proteomes" id="UP000006738">
    <property type="component" value="Chromosome I"/>
</dbReference>
<dbReference type="GO" id="GO:0005737">
    <property type="term" value="C:cytoplasm"/>
    <property type="evidence" value="ECO:0007669"/>
    <property type="project" value="UniProtKB-SubCell"/>
</dbReference>
<dbReference type="GO" id="GO:0009379">
    <property type="term" value="C:Holliday junction helicase complex"/>
    <property type="evidence" value="ECO:0007669"/>
    <property type="project" value="InterPro"/>
</dbReference>
<dbReference type="GO" id="GO:0048476">
    <property type="term" value="C:Holliday junction resolvase complex"/>
    <property type="evidence" value="ECO:0007669"/>
    <property type="project" value="UniProtKB-UniRule"/>
</dbReference>
<dbReference type="GO" id="GO:0005524">
    <property type="term" value="F:ATP binding"/>
    <property type="evidence" value="ECO:0007669"/>
    <property type="project" value="InterPro"/>
</dbReference>
<dbReference type="GO" id="GO:0000400">
    <property type="term" value="F:four-way junction DNA binding"/>
    <property type="evidence" value="ECO:0007669"/>
    <property type="project" value="UniProtKB-UniRule"/>
</dbReference>
<dbReference type="GO" id="GO:0009378">
    <property type="term" value="F:four-way junction helicase activity"/>
    <property type="evidence" value="ECO:0007669"/>
    <property type="project" value="InterPro"/>
</dbReference>
<dbReference type="GO" id="GO:0006310">
    <property type="term" value="P:DNA recombination"/>
    <property type="evidence" value="ECO:0007669"/>
    <property type="project" value="UniProtKB-UniRule"/>
</dbReference>
<dbReference type="GO" id="GO:0006281">
    <property type="term" value="P:DNA repair"/>
    <property type="evidence" value="ECO:0007669"/>
    <property type="project" value="UniProtKB-UniRule"/>
</dbReference>
<dbReference type="CDD" id="cd14332">
    <property type="entry name" value="UBA_RuvA_C"/>
    <property type="match status" value="1"/>
</dbReference>
<dbReference type="Gene3D" id="1.10.150.20">
    <property type="entry name" value="5' to 3' exonuclease, C-terminal subdomain"/>
    <property type="match status" value="1"/>
</dbReference>
<dbReference type="Gene3D" id="1.10.8.10">
    <property type="entry name" value="DNA helicase RuvA subunit, C-terminal domain"/>
    <property type="match status" value="1"/>
</dbReference>
<dbReference type="Gene3D" id="2.40.50.140">
    <property type="entry name" value="Nucleic acid-binding proteins"/>
    <property type="match status" value="1"/>
</dbReference>
<dbReference type="HAMAP" id="MF_00031">
    <property type="entry name" value="DNA_HJ_migration_RuvA"/>
    <property type="match status" value="1"/>
</dbReference>
<dbReference type="InterPro" id="IPR013849">
    <property type="entry name" value="DNA_helicase_Holl-junc_RuvA_I"/>
</dbReference>
<dbReference type="InterPro" id="IPR003583">
    <property type="entry name" value="Hlx-hairpin-Hlx_DNA-bd_motif"/>
</dbReference>
<dbReference type="InterPro" id="IPR012340">
    <property type="entry name" value="NA-bd_OB-fold"/>
</dbReference>
<dbReference type="InterPro" id="IPR000085">
    <property type="entry name" value="RuvA"/>
</dbReference>
<dbReference type="InterPro" id="IPR010994">
    <property type="entry name" value="RuvA_2-like"/>
</dbReference>
<dbReference type="InterPro" id="IPR011114">
    <property type="entry name" value="RuvA_C"/>
</dbReference>
<dbReference type="InterPro" id="IPR036267">
    <property type="entry name" value="RuvA_C_sf"/>
</dbReference>
<dbReference type="NCBIfam" id="TIGR00084">
    <property type="entry name" value="ruvA"/>
    <property type="match status" value="1"/>
</dbReference>
<dbReference type="Pfam" id="PF14520">
    <property type="entry name" value="HHH_5"/>
    <property type="match status" value="1"/>
</dbReference>
<dbReference type="Pfam" id="PF07499">
    <property type="entry name" value="RuvA_C"/>
    <property type="match status" value="1"/>
</dbReference>
<dbReference type="Pfam" id="PF01330">
    <property type="entry name" value="RuvA_N"/>
    <property type="match status" value="1"/>
</dbReference>
<dbReference type="SMART" id="SM00278">
    <property type="entry name" value="HhH1"/>
    <property type="match status" value="2"/>
</dbReference>
<dbReference type="SUPFAM" id="SSF46929">
    <property type="entry name" value="DNA helicase RuvA subunit, C-terminal domain"/>
    <property type="match status" value="1"/>
</dbReference>
<dbReference type="SUPFAM" id="SSF50249">
    <property type="entry name" value="Nucleic acid-binding proteins"/>
    <property type="match status" value="1"/>
</dbReference>
<dbReference type="SUPFAM" id="SSF47781">
    <property type="entry name" value="RuvA domain 2-like"/>
    <property type="match status" value="1"/>
</dbReference>
<keyword id="KW-0963">Cytoplasm</keyword>
<keyword id="KW-0227">DNA damage</keyword>
<keyword id="KW-0233">DNA recombination</keyword>
<keyword id="KW-0234">DNA repair</keyword>
<keyword id="KW-0238">DNA-binding</keyword>
<gene>
    <name evidence="1" type="primary">ruvA</name>
    <name type="ordered locus">BURPS1106A_3400</name>
</gene>
<feature type="chain" id="PRO_1000002414" description="Holliday junction branch migration complex subunit RuvA">
    <location>
        <begin position="1"/>
        <end position="193"/>
    </location>
</feature>
<feature type="region of interest" description="Domain I" evidence="1">
    <location>
        <begin position="1"/>
        <end position="64"/>
    </location>
</feature>
<feature type="region of interest" description="Domain II" evidence="1">
    <location>
        <begin position="65"/>
        <end position="139"/>
    </location>
</feature>
<feature type="region of interest" description="Flexible linker" evidence="1">
    <location>
        <begin position="139"/>
        <end position="143"/>
    </location>
</feature>
<feature type="region of interest" description="Domain III" evidence="1">
    <location>
        <begin position="144"/>
        <end position="193"/>
    </location>
</feature>
<organism>
    <name type="scientific">Burkholderia pseudomallei (strain 1106a)</name>
    <dbReference type="NCBI Taxonomy" id="357348"/>
    <lineage>
        <taxon>Bacteria</taxon>
        <taxon>Pseudomonadati</taxon>
        <taxon>Pseudomonadota</taxon>
        <taxon>Betaproteobacteria</taxon>
        <taxon>Burkholderiales</taxon>
        <taxon>Burkholderiaceae</taxon>
        <taxon>Burkholderia</taxon>
        <taxon>pseudomallei group</taxon>
    </lineage>
</organism>
<evidence type="ECO:0000255" key="1">
    <source>
        <dbReference type="HAMAP-Rule" id="MF_00031"/>
    </source>
</evidence>
<protein>
    <recommendedName>
        <fullName evidence="1">Holliday junction branch migration complex subunit RuvA</fullName>
    </recommendedName>
</protein>
<reference key="1">
    <citation type="journal article" date="2010" name="Genome Biol. Evol.">
        <title>Continuing evolution of Burkholderia mallei through genome reduction and large-scale rearrangements.</title>
        <authorList>
            <person name="Losada L."/>
            <person name="Ronning C.M."/>
            <person name="DeShazer D."/>
            <person name="Woods D."/>
            <person name="Fedorova N."/>
            <person name="Kim H.S."/>
            <person name="Shabalina S.A."/>
            <person name="Pearson T.R."/>
            <person name="Brinkac L."/>
            <person name="Tan P."/>
            <person name="Nandi T."/>
            <person name="Crabtree J."/>
            <person name="Badger J."/>
            <person name="Beckstrom-Sternberg S."/>
            <person name="Saqib M."/>
            <person name="Schutzer S.E."/>
            <person name="Keim P."/>
            <person name="Nierman W.C."/>
        </authorList>
    </citation>
    <scope>NUCLEOTIDE SEQUENCE [LARGE SCALE GENOMIC DNA]</scope>
    <source>
        <strain>1106a</strain>
    </source>
</reference>
<comment type="function">
    <text evidence="1">The RuvA-RuvB-RuvC complex processes Holliday junction (HJ) DNA during genetic recombination and DNA repair, while the RuvA-RuvB complex plays an important role in the rescue of blocked DNA replication forks via replication fork reversal (RFR). RuvA specifically binds to HJ cruciform DNA, conferring on it an open structure. The RuvB hexamer acts as an ATP-dependent pump, pulling dsDNA into and through the RuvAB complex. HJ branch migration allows RuvC to scan DNA until it finds its consensus sequence, where it cleaves and resolves the cruciform DNA.</text>
</comment>
<comment type="subunit">
    <text evidence="1">Homotetramer. Forms an RuvA(8)-RuvB(12)-Holliday junction (HJ) complex. HJ DNA is sandwiched between 2 RuvA tetramers; dsDNA enters through RuvA and exits via RuvB. An RuvB hexamer assembles on each DNA strand where it exits the tetramer. Each RuvB hexamer is contacted by two RuvA subunits (via domain III) on 2 adjacent RuvB subunits; this complex drives branch migration. In the full resolvosome a probable DNA-RuvA(4)-RuvB(12)-RuvC(2) complex forms which resolves the HJ.</text>
</comment>
<comment type="subcellular location">
    <subcellularLocation>
        <location evidence="1">Cytoplasm</location>
    </subcellularLocation>
</comment>
<comment type="domain">
    <text evidence="1">Has three domains with a flexible linker between the domains II and III and assumes an 'L' shape. Domain III is highly mobile and contacts RuvB.</text>
</comment>
<comment type="similarity">
    <text evidence="1">Belongs to the RuvA family.</text>
</comment>
<name>RUVA_BURP0</name>
<proteinExistence type="inferred from homology"/>
<accession>A3NZ66</accession>